<comment type="function">
    <text evidence="1">Redox regulated molecular chaperone. Protects both thermally unfolding and oxidatively damaged proteins from irreversible aggregation. Plays an important role in the bacterial defense system toward oxidative stress.</text>
</comment>
<comment type="subcellular location">
    <subcellularLocation>
        <location evidence="1">Cytoplasm</location>
    </subcellularLocation>
</comment>
<comment type="PTM">
    <text evidence="1">Under oxidizing conditions two disulfide bonds are formed involving the reactive cysteines. Under reducing conditions zinc is bound to the reactive cysteines and the protein is inactive.</text>
</comment>
<comment type="similarity">
    <text evidence="1">Belongs to the HSP33 family.</text>
</comment>
<gene>
    <name evidence="1" type="primary">hslO</name>
    <name type="ordered locus">SUB0143</name>
</gene>
<organism>
    <name type="scientific">Streptococcus uberis (strain ATCC BAA-854 / 0140J)</name>
    <dbReference type="NCBI Taxonomy" id="218495"/>
    <lineage>
        <taxon>Bacteria</taxon>
        <taxon>Bacillati</taxon>
        <taxon>Bacillota</taxon>
        <taxon>Bacilli</taxon>
        <taxon>Lactobacillales</taxon>
        <taxon>Streptococcaceae</taxon>
        <taxon>Streptococcus</taxon>
    </lineage>
</organism>
<proteinExistence type="inferred from homology"/>
<accession>B9DT23</accession>
<name>HSLO_STRU0</name>
<feature type="chain" id="PRO_1000119267" description="33 kDa chaperonin">
    <location>
        <begin position="1"/>
        <end position="290"/>
    </location>
</feature>
<feature type="disulfide bond" description="Redox-active" evidence="1">
    <location>
        <begin position="235"/>
        <end position="237"/>
    </location>
</feature>
<feature type="disulfide bond" description="Redox-active" evidence="1">
    <location>
        <begin position="268"/>
        <end position="271"/>
    </location>
</feature>
<dbReference type="EMBL" id="AM946015">
    <property type="protein sequence ID" value="CAR40573.1"/>
    <property type="molecule type" value="Genomic_DNA"/>
</dbReference>
<dbReference type="RefSeq" id="WP_012657698.1">
    <property type="nucleotide sequence ID" value="NC_012004.1"/>
</dbReference>
<dbReference type="SMR" id="B9DT23"/>
<dbReference type="STRING" id="218495.SUB0143"/>
<dbReference type="KEGG" id="sub:SUB0143"/>
<dbReference type="eggNOG" id="COG1281">
    <property type="taxonomic scope" value="Bacteria"/>
</dbReference>
<dbReference type="HOGENOM" id="CLU_054493_1_0_9"/>
<dbReference type="OrthoDB" id="9776534at2"/>
<dbReference type="Proteomes" id="UP000000449">
    <property type="component" value="Chromosome"/>
</dbReference>
<dbReference type="GO" id="GO:0005737">
    <property type="term" value="C:cytoplasm"/>
    <property type="evidence" value="ECO:0007669"/>
    <property type="project" value="UniProtKB-SubCell"/>
</dbReference>
<dbReference type="GO" id="GO:0044183">
    <property type="term" value="F:protein folding chaperone"/>
    <property type="evidence" value="ECO:0007669"/>
    <property type="project" value="TreeGrafter"/>
</dbReference>
<dbReference type="GO" id="GO:0051082">
    <property type="term" value="F:unfolded protein binding"/>
    <property type="evidence" value="ECO:0007669"/>
    <property type="project" value="UniProtKB-UniRule"/>
</dbReference>
<dbReference type="GO" id="GO:0042026">
    <property type="term" value="P:protein refolding"/>
    <property type="evidence" value="ECO:0007669"/>
    <property type="project" value="TreeGrafter"/>
</dbReference>
<dbReference type="CDD" id="cd00498">
    <property type="entry name" value="Hsp33"/>
    <property type="match status" value="1"/>
</dbReference>
<dbReference type="Gene3D" id="3.55.30.10">
    <property type="entry name" value="Hsp33 domain"/>
    <property type="match status" value="1"/>
</dbReference>
<dbReference type="Gene3D" id="3.90.1280.10">
    <property type="entry name" value="HSP33 redox switch-like"/>
    <property type="match status" value="1"/>
</dbReference>
<dbReference type="HAMAP" id="MF_00117">
    <property type="entry name" value="HslO"/>
    <property type="match status" value="1"/>
</dbReference>
<dbReference type="InterPro" id="IPR000397">
    <property type="entry name" value="Heat_shock_Hsp33"/>
</dbReference>
<dbReference type="InterPro" id="IPR016154">
    <property type="entry name" value="Heat_shock_Hsp33_C"/>
</dbReference>
<dbReference type="InterPro" id="IPR016153">
    <property type="entry name" value="Heat_shock_Hsp33_N"/>
</dbReference>
<dbReference type="NCBIfam" id="NF001033">
    <property type="entry name" value="PRK00114.1"/>
    <property type="match status" value="1"/>
</dbReference>
<dbReference type="PANTHER" id="PTHR30111">
    <property type="entry name" value="33 KDA CHAPERONIN"/>
    <property type="match status" value="1"/>
</dbReference>
<dbReference type="PANTHER" id="PTHR30111:SF1">
    <property type="entry name" value="33 KDA CHAPERONIN"/>
    <property type="match status" value="1"/>
</dbReference>
<dbReference type="Pfam" id="PF01430">
    <property type="entry name" value="HSP33"/>
    <property type="match status" value="1"/>
</dbReference>
<dbReference type="PIRSF" id="PIRSF005261">
    <property type="entry name" value="Heat_shock_Hsp33"/>
    <property type="match status" value="1"/>
</dbReference>
<dbReference type="SUPFAM" id="SSF64397">
    <property type="entry name" value="Hsp33 domain"/>
    <property type="match status" value="1"/>
</dbReference>
<dbReference type="SUPFAM" id="SSF118352">
    <property type="entry name" value="HSP33 redox switch-like"/>
    <property type="match status" value="1"/>
</dbReference>
<sequence length="290" mass="31459">MDKIIKSISETGSFRAFVLDSTQTVKTAQEKHQTLSSSTVALGRTLIANQILAANQKGDSKITVKVIGDSSFGHIISVADTKGHVKGYIQNTGVDIKKTATGEVLVGPFMGNGHFVTIIDYGTGNPYTSTTPLITGEIGEDFAYYLTESEQTPSAVGLNVLLDEEDKVKVAGGFMVQALPGASEEEIARYEKRLQEMPAISTLLAAEDPSDALLSAIYGDEGYKRLSEDSLSFQCDCSKDRFESALMSLPNTDLQDMIDQDHGAEIICQFCQTRYQFSEDDLKGIINDKA</sequence>
<protein>
    <recommendedName>
        <fullName evidence="1">33 kDa chaperonin</fullName>
    </recommendedName>
    <alternativeName>
        <fullName evidence="1">Heat shock protein 33 homolog</fullName>
        <shortName evidence="1">HSP33</shortName>
    </alternativeName>
</protein>
<evidence type="ECO:0000255" key="1">
    <source>
        <dbReference type="HAMAP-Rule" id="MF_00117"/>
    </source>
</evidence>
<keyword id="KW-0143">Chaperone</keyword>
<keyword id="KW-0963">Cytoplasm</keyword>
<keyword id="KW-1015">Disulfide bond</keyword>
<keyword id="KW-0676">Redox-active center</keyword>
<keyword id="KW-1185">Reference proteome</keyword>
<keyword id="KW-0346">Stress response</keyword>
<keyword id="KW-0862">Zinc</keyword>
<reference key="1">
    <citation type="journal article" date="2009" name="BMC Genomics">
        <title>Evidence for niche adaptation in the genome of the bovine pathogen Streptococcus uberis.</title>
        <authorList>
            <person name="Ward P.N."/>
            <person name="Holden M.T.G."/>
            <person name="Leigh J.A."/>
            <person name="Lennard N."/>
            <person name="Bignell A."/>
            <person name="Barron A."/>
            <person name="Clark L."/>
            <person name="Quail M.A."/>
            <person name="Woodward J."/>
            <person name="Barrell B.G."/>
            <person name="Egan S.A."/>
            <person name="Field T.R."/>
            <person name="Maskell D."/>
            <person name="Kehoe M."/>
            <person name="Dowson C.G."/>
            <person name="Chanter N."/>
            <person name="Whatmore A.M."/>
            <person name="Bentley S.D."/>
            <person name="Parkhill J."/>
        </authorList>
    </citation>
    <scope>NUCLEOTIDE SEQUENCE [LARGE SCALE GENOMIC DNA]</scope>
    <source>
        <strain>ATCC BAA-854 / 0140J</strain>
    </source>
</reference>